<reference key="1">
    <citation type="journal article" date="1999" name="Nucleic Acids Res.">
        <title>Caenorhabditis elegans mRNAs that encode a protein similar to ADARs derive from an operon containing six genes.</title>
        <authorList>
            <person name="Hough R.F."/>
            <person name="Lingam A.T."/>
            <person name="Bass B.L."/>
        </authorList>
    </citation>
    <scope>NUCLEOTIDE SEQUENCE [MRNA]</scope>
    <source>
        <strain>Bristol N2</strain>
    </source>
</reference>
<reference key="2">
    <citation type="journal article" date="1998" name="Science">
        <title>Genome sequence of the nematode C. elegans: a platform for investigating biology.</title>
        <authorList>
            <consortium name="The C. elegans sequencing consortium"/>
        </authorList>
    </citation>
    <scope>NUCLEOTIDE SEQUENCE [LARGE SCALE GENOMIC DNA]</scope>
    <source>
        <strain>Bristol N2</strain>
    </source>
</reference>
<reference key="3">
    <citation type="journal article" date="2002" name="EMBO J.">
        <title>RNA editing by ADARs is important for normal behavior in Caenorhabditis elegans.</title>
        <authorList>
            <person name="Tonkin L.A."/>
            <person name="Saccomanno L."/>
            <person name="Morse D.P."/>
            <person name="Brodigan T."/>
            <person name="Krause M."/>
            <person name="Bass B.L."/>
        </authorList>
    </citation>
    <scope>FUNCTION</scope>
    <scope>CATALYTIC ACTIVITY</scope>
</reference>
<reference key="4">
    <citation type="journal article" date="2002" name="Mol. Cell">
        <title>The role of RNA editing by ADARs in RNAi.</title>
        <authorList>
            <person name="Knight S.W."/>
            <person name="Bass B.L."/>
        </authorList>
    </citation>
    <scope>FUNCTION</scope>
    <scope>ROLE IN TRANSGENE SILENCING</scope>
</reference>
<reference key="5">
    <citation type="journal article" date="2003" name="Science">
        <title>Mutations in RNAi rescue aberrant chemotaxis of ADAR mutants.</title>
        <authorList>
            <person name="Tonkin L.A."/>
            <person name="Bass B.L."/>
        </authorList>
    </citation>
    <scope>FUNCTION</scope>
</reference>
<reference key="6">
    <citation type="journal article" date="2008" name="Genetics">
        <title>ADBP-1 regulates an ADAR RNA-editing enzyme to antagonize RNA-interference-mediated gene silencing in Caenorhabditis elegans.</title>
        <authorList>
            <person name="Ohta H."/>
            <person name="Fujiwara M."/>
            <person name="Ohshima Y."/>
            <person name="Ishihara T."/>
        </authorList>
    </citation>
    <scope>INTERACTION WITH ADBP-1</scope>
    <scope>SUBCELLULAR LOCATION</scope>
    <scope>ROLE IN TRANSGENE SILENCING</scope>
</reference>
<reference key="7">
    <citation type="journal article" date="2008" name="RNA">
        <title>C. elegans and H. sapiens mRNAs with edited 3' UTRs are present on polysomes.</title>
        <authorList>
            <person name="Hundley H.A."/>
            <person name="Krauchuk A.A."/>
            <person name="Bass B.L."/>
        </authorList>
    </citation>
    <scope>DEVELOPMENTAL STAGE</scope>
</reference>
<reference key="8">
    <citation type="journal article" date="2009" name="PLoS ONE">
        <title>RNA editing genes associated with extreme old age in humans and with lifespan in C. elegans.</title>
        <authorList>
            <person name="Sebastiani P."/>
            <person name="Montano M."/>
            <person name="Puca A."/>
            <person name="Solovieff N."/>
            <person name="Kojima T."/>
            <person name="Wang M.C."/>
            <person name="Melista E."/>
            <person name="Meltzer M."/>
            <person name="Fischer S.E."/>
            <person name="Andersen S."/>
            <person name="Hartley S.H."/>
            <person name="Sedgewick A."/>
            <person name="Arai Y."/>
            <person name="Bergman A."/>
            <person name="Barzilai N."/>
            <person name="Terry D.F."/>
            <person name="Riva A."/>
            <person name="Anselmi C.V."/>
            <person name="Malovini A."/>
            <person name="Kitamoto A."/>
            <person name="Sawabe M."/>
            <person name="Arai T."/>
            <person name="Gondo Y."/>
            <person name="Steinberg M.H."/>
            <person name="Hirose N."/>
            <person name="Atzmon G."/>
            <person name="Ruvkun G."/>
            <person name="Baldwin C.T."/>
            <person name="Perls T.T."/>
        </authorList>
    </citation>
    <scope>FUNCTION</scope>
</reference>
<reference key="9">
    <citation type="journal article" date="2014" name="Cell Rep.">
        <title>The dsRBP and inactive editor ADR-1 utilizes dsRNA binding to regulate A-to-I RNA editing across the C. elegans transcriptome.</title>
        <authorList>
            <person name="Washburn M.C."/>
            <person name="Kakaradov B."/>
            <person name="Sundararaman B."/>
            <person name="Wheeler E."/>
            <person name="Hoon S."/>
            <person name="Yeo G.W."/>
            <person name="Hundley H.A."/>
        </authorList>
    </citation>
    <scope>INTERACTION WITH ADR-1</scope>
</reference>
<reference key="10">
    <citation type="journal article" date="2015" name="Genome Res.">
        <title>Profiling the RNA editomes of wild-type C. elegans and ADAR mutants.</title>
        <authorList>
            <person name="Zhao H.Q."/>
            <person name="Zhang P."/>
            <person name="Gao H."/>
            <person name="He X."/>
            <person name="Dou Y."/>
            <person name="Huang A.Y."/>
            <person name="Liu X.M."/>
            <person name="Ye A.Y."/>
            <person name="Dong M.Q."/>
            <person name="Wei L."/>
        </authorList>
    </citation>
    <scope>FUNCTION</scope>
</reference>
<reference key="11">
    <citation type="journal article" date="2017" name="Elife">
        <title>The C. elegans neural editome reveals an ADAR target mRNA required for proper chemotaxis.</title>
        <authorList>
            <person name="Deffit S.N."/>
            <person name="Yee B.A."/>
            <person name="Manning A.C."/>
            <person name="Rajendren S."/>
            <person name="Vadlamani P."/>
            <person name="Wheeler E.C."/>
            <person name="Domissy A."/>
            <person name="Washburn M.C."/>
            <person name="Yeo G.W."/>
            <person name="Hundley H.A."/>
        </authorList>
    </citation>
    <scope>FUNCTION</scope>
    <scope>MUTAGENESIS OF GLY-184</scope>
</reference>
<keyword id="KW-0145">Chemotaxis</keyword>
<keyword id="KW-0963">Cytoplasm</keyword>
<keyword id="KW-0378">Hydrolase</keyword>
<keyword id="KW-0479">Metal-binding</keyword>
<keyword id="KW-0507">mRNA processing</keyword>
<keyword id="KW-0539">Nucleus</keyword>
<keyword id="KW-1185">Reference proteome</keyword>
<keyword id="KW-0694">RNA-binding</keyword>
<keyword id="KW-0862">Zinc</keyword>
<organism>
    <name type="scientific">Caenorhabditis elegans</name>
    <dbReference type="NCBI Taxonomy" id="6239"/>
    <lineage>
        <taxon>Eukaryota</taxon>
        <taxon>Metazoa</taxon>
        <taxon>Ecdysozoa</taxon>
        <taxon>Nematoda</taxon>
        <taxon>Chromadorea</taxon>
        <taxon>Rhabditida</taxon>
        <taxon>Rhabditina</taxon>
        <taxon>Rhabditomorpha</taxon>
        <taxon>Rhabditoidea</taxon>
        <taxon>Rhabditidae</taxon>
        <taxon>Peloderinae</taxon>
        <taxon>Caenorhabditis</taxon>
    </lineage>
</organism>
<dbReference type="EC" id="3.5.4.37" evidence="4"/>
<dbReference type="EMBL" id="AF051275">
    <property type="protein sequence ID" value="AAC25097.1"/>
    <property type="molecule type" value="mRNA"/>
</dbReference>
<dbReference type="EMBL" id="FO081693">
    <property type="protein sequence ID" value="CCD73351.1"/>
    <property type="molecule type" value="Genomic_DNA"/>
</dbReference>
<dbReference type="PIR" id="T16913">
    <property type="entry name" value="T16913"/>
</dbReference>
<dbReference type="PIR" id="T42758">
    <property type="entry name" value="T42758"/>
</dbReference>
<dbReference type="RefSeq" id="NP_498594.1">
    <property type="nucleotide sequence ID" value="NM_066193.5"/>
</dbReference>
<dbReference type="SMR" id="Q22618"/>
<dbReference type="BioGRID" id="41234">
    <property type="interactions" value="9"/>
</dbReference>
<dbReference type="DIP" id="DIP-26710N"/>
<dbReference type="FunCoup" id="Q22618">
    <property type="interactions" value="2056"/>
</dbReference>
<dbReference type="IntAct" id="Q22618">
    <property type="interactions" value="1"/>
</dbReference>
<dbReference type="STRING" id="6239.T20H4.4.2"/>
<dbReference type="iPTMnet" id="Q22618"/>
<dbReference type="PaxDb" id="6239-T20H4.4"/>
<dbReference type="PeptideAtlas" id="Q22618"/>
<dbReference type="EnsemblMetazoa" id="T20H4.4.1">
    <property type="protein sequence ID" value="T20H4.4.1"/>
    <property type="gene ID" value="WBGene00000080"/>
</dbReference>
<dbReference type="GeneID" id="176022"/>
<dbReference type="KEGG" id="cel:CELE_T20H4.4"/>
<dbReference type="UCSC" id="T20H4.4.1">
    <property type="organism name" value="c. elegans"/>
</dbReference>
<dbReference type="AGR" id="WB:WBGene00000080"/>
<dbReference type="CTD" id="176022"/>
<dbReference type="WormBase" id="T20H4.4">
    <property type="protein sequence ID" value="CE25120"/>
    <property type="gene ID" value="WBGene00000080"/>
    <property type="gene designation" value="adr-2"/>
</dbReference>
<dbReference type="eggNOG" id="KOG2777">
    <property type="taxonomic scope" value="Eukaryota"/>
</dbReference>
<dbReference type="GeneTree" id="ENSGT00940000157243"/>
<dbReference type="HOGENOM" id="CLU_005382_3_1_1"/>
<dbReference type="InParanoid" id="Q22618"/>
<dbReference type="OMA" id="RKHTYAK"/>
<dbReference type="OrthoDB" id="10268011at2759"/>
<dbReference type="PhylomeDB" id="Q22618"/>
<dbReference type="Reactome" id="R-CEL-75102">
    <property type="pathway name" value="C6 deamination of adenosine"/>
</dbReference>
<dbReference type="Reactome" id="R-CEL-77042">
    <property type="pathway name" value="Formation of editosomes by ADAR proteins"/>
</dbReference>
<dbReference type="PRO" id="PR:Q22618"/>
<dbReference type="Proteomes" id="UP000001940">
    <property type="component" value="Chromosome III"/>
</dbReference>
<dbReference type="Bgee" id="WBGene00000080">
    <property type="expression patterns" value="Expressed in embryo and 4 other cell types or tissues"/>
</dbReference>
<dbReference type="GO" id="GO:0005737">
    <property type="term" value="C:cytoplasm"/>
    <property type="evidence" value="ECO:0000314"/>
    <property type="project" value="WormBase"/>
</dbReference>
<dbReference type="GO" id="GO:0005730">
    <property type="term" value="C:nucleolus"/>
    <property type="evidence" value="ECO:0000318"/>
    <property type="project" value="GO_Central"/>
</dbReference>
<dbReference type="GO" id="GO:0005634">
    <property type="term" value="C:nucleus"/>
    <property type="evidence" value="ECO:0000314"/>
    <property type="project" value="WormBase"/>
</dbReference>
<dbReference type="GO" id="GO:0003726">
    <property type="term" value="F:double-stranded RNA adenosine deaminase activity"/>
    <property type="evidence" value="ECO:0000315"/>
    <property type="project" value="UniProtKB"/>
</dbReference>
<dbReference type="GO" id="GO:0003725">
    <property type="term" value="F:double-stranded RNA binding"/>
    <property type="evidence" value="ECO:0000318"/>
    <property type="project" value="GO_Central"/>
</dbReference>
<dbReference type="GO" id="GO:0046872">
    <property type="term" value="F:metal ion binding"/>
    <property type="evidence" value="ECO:0007669"/>
    <property type="project" value="UniProtKB-KW"/>
</dbReference>
<dbReference type="GO" id="GO:0008251">
    <property type="term" value="F:tRNA-specific adenosine deaminase activity"/>
    <property type="evidence" value="ECO:0000318"/>
    <property type="project" value="GO_Central"/>
</dbReference>
<dbReference type="GO" id="GO:0006382">
    <property type="term" value="P:adenosine to inosine editing"/>
    <property type="evidence" value="ECO:0000315"/>
    <property type="project" value="UniProtKB"/>
</dbReference>
<dbReference type="GO" id="GO:0006935">
    <property type="term" value="P:chemotaxis"/>
    <property type="evidence" value="ECO:0007669"/>
    <property type="project" value="UniProtKB-KW"/>
</dbReference>
<dbReference type="GO" id="GO:0008340">
    <property type="term" value="P:determination of adult lifespan"/>
    <property type="evidence" value="ECO:0000315"/>
    <property type="project" value="UniProtKB"/>
</dbReference>
<dbReference type="GO" id="GO:0006397">
    <property type="term" value="P:mRNA processing"/>
    <property type="evidence" value="ECO:0007669"/>
    <property type="project" value="UniProtKB-KW"/>
</dbReference>
<dbReference type="GO" id="GO:0050921">
    <property type="term" value="P:positive regulation of chemotaxis"/>
    <property type="evidence" value="ECO:0000315"/>
    <property type="project" value="UniProtKB"/>
</dbReference>
<dbReference type="GO" id="GO:0006396">
    <property type="term" value="P:RNA processing"/>
    <property type="evidence" value="ECO:0000318"/>
    <property type="project" value="GO_Central"/>
</dbReference>
<dbReference type="CDD" id="cd00048">
    <property type="entry name" value="DSRM_SF"/>
    <property type="match status" value="1"/>
</dbReference>
<dbReference type="Gene3D" id="3.30.160.20">
    <property type="match status" value="1"/>
</dbReference>
<dbReference type="InterPro" id="IPR002466">
    <property type="entry name" value="A_deamin"/>
</dbReference>
<dbReference type="InterPro" id="IPR014720">
    <property type="entry name" value="dsRBD_dom"/>
</dbReference>
<dbReference type="PANTHER" id="PTHR10910:SF62">
    <property type="entry name" value="AT07585P-RELATED"/>
    <property type="match status" value="1"/>
</dbReference>
<dbReference type="PANTHER" id="PTHR10910">
    <property type="entry name" value="EUKARYOTE SPECIFIC DSRNA BINDING PROTEIN"/>
    <property type="match status" value="1"/>
</dbReference>
<dbReference type="Pfam" id="PF02137">
    <property type="entry name" value="A_deamin"/>
    <property type="match status" value="1"/>
</dbReference>
<dbReference type="Pfam" id="PF00035">
    <property type="entry name" value="dsrm"/>
    <property type="match status" value="1"/>
</dbReference>
<dbReference type="SMART" id="SM00552">
    <property type="entry name" value="ADEAMc"/>
    <property type="match status" value="1"/>
</dbReference>
<dbReference type="SUPFAM" id="SSF54768">
    <property type="entry name" value="dsRNA-binding domain-like"/>
    <property type="match status" value="1"/>
</dbReference>
<dbReference type="PROSITE" id="PS50141">
    <property type="entry name" value="A_DEAMIN_EDITASE"/>
    <property type="match status" value="1"/>
</dbReference>
<dbReference type="PROSITE" id="PS50137">
    <property type="entry name" value="DS_RBD"/>
    <property type="match status" value="1"/>
</dbReference>
<accession>Q22618</accession>
<accession>O76295</accession>
<sequence length="495" mass="55320">MSVEEGMEVELKSEKMDLDDNIPDFVKETVERSGKNPMSLFSELYVHMTGNTPVFDFYNRNQPNGSMKFICVVILNGERIEGNVKSKKKEAKVSCSLKGLEVVLKHVSEYVVPAVKFEEKTTFFEMLREHTYAKFYELCKNNALIYGFEKVIASVFLKINGNLQIIALSTGNKGLRGDKIVNDGTALIDCHAEILARRGLLRFLYSEVLKFSTEPPNSIFTKGKNALVLKPGISFHLFINTAPCGVARIDKKLKPGTSDDLQNSSRLRFKIDKGMGTVLGGASEFEAPQTFDGIMMGERMRTMSCSDKLLRANVLGVQGAILSHFIDPIYYSSIAVAELNNADRLRKAVYSRAATFKPPAPFHVQDVEIGECQVEDTEQSTSAAARSTISSMNWNLADGNTEVVRTSDGMVHDKDMSGADITTPSRLCKKNMAELMITICTLTKTSVDYPISYEELKAGSQEYAAAKKSFITWLRQKDLGIWQRKPREFQMFTIN</sequence>
<proteinExistence type="evidence at protein level"/>
<gene>
    <name type="primary">adr-2</name>
    <name type="ORF">T20H4.4</name>
</gene>
<name>DSRAD_CAEEL</name>
<evidence type="ECO:0000255" key="1">
    <source>
        <dbReference type="PROSITE-ProRule" id="PRU00240"/>
    </source>
</evidence>
<evidence type="ECO:0000255" key="2">
    <source>
        <dbReference type="PROSITE-ProRule" id="PRU00266"/>
    </source>
</evidence>
<evidence type="ECO:0000269" key="3">
    <source>
    </source>
</evidence>
<evidence type="ECO:0000269" key="4">
    <source>
    </source>
</evidence>
<evidence type="ECO:0000269" key="5">
    <source>
    </source>
</evidence>
<evidence type="ECO:0000269" key="6">
    <source>
    </source>
</evidence>
<evidence type="ECO:0000269" key="7">
    <source>
    </source>
</evidence>
<evidence type="ECO:0000269" key="8">
    <source>
    </source>
</evidence>
<evidence type="ECO:0000269" key="9">
    <source>
    </source>
</evidence>
<evidence type="ECO:0000269" key="10">
    <source>
    </source>
</evidence>
<evidence type="ECO:0000269" key="11">
    <source>
    </source>
</evidence>
<evidence type="ECO:0000305" key="12"/>
<protein>
    <recommendedName>
        <fullName evidence="12">Double-stranded RNA-specific adenosine deaminase adr-2</fullName>
        <shortName>DRADA</shortName>
        <ecNumber evidence="4">3.5.4.37</ecNumber>
    </recommendedName>
</protein>
<feature type="chain" id="PRO_0000171778" description="Double-stranded RNA-specific adenosine deaminase adr-2">
    <location>
        <begin position="1"/>
        <end position="495"/>
    </location>
</feature>
<feature type="domain" description="DRBM" evidence="2">
    <location>
        <begin position="36"/>
        <end position="105"/>
    </location>
</feature>
<feature type="domain" description="A to I editase" evidence="1">
    <location>
        <begin position="167"/>
        <end position="492"/>
    </location>
</feature>
<feature type="active site" description="Proton donor" evidence="1">
    <location>
        <position position="193"/>
    </location>
</feature>
<feature type="binding site" evidence="1">
    <location>
        <position position="191"/>
    </location>
    <ligand>
        <name>Zn(2+)</name>
        <dbReference type="ChEBI" id="CHEBI:29105"/>
    </ligand>
</feature>
<feature type="binding site" evidence="1">
    <location>
        <position position="244"/>
    </location>
    <ligand>
        <name>Zn(2+)</name>
        <dbReference type="ChEBI" id="CHEBI:29105"/>
    </ligand>
</feature>
<feature type="binding site" evidence="1">
    <location>
        <position position="305"/>
    </location>
    <ligand>
        <name>Zn(2+)</name>
        <dbReference type="ChEBI" id="CHEBI:29105"/>
    </ligand>
</feature>
<feature type="mutagenesis site" description="Abolishes editing of clec-41 RNA, leads to a threefold reduction in expression of clec-41 mRNA in neural cells and impairs chemotaxis." evidence="11">
    <original>G</original>
    <variation>R</variation>
    <location>
        <position position="184"/>
    </location>
</feature>
<comment type="function">
    <text evidence="3 4 5 8 10 11">Catalyzes the hydrolytic deamination of adenosine to inosine in double-stranded RNA (dsRNA) referred to as A-to-I RNA editing (PubMed:12426375). Acts primarily on non-coding regions of protein-coding genes including introns and untranslated regions (UTR) (PubMed:25373143, PubMed:28925356). Required for normal chemotaxis (PubMed:12426375, PubMed:14657490). Edits the 3' UTR of clec-41 which is required for normal clec-41 expression and for chemotaxis (PubMed:28925356). Plays a role in determining lifespan (PubMed:20011587, PubMed:25373143). Not required for RNA interference (PubMed:12419225). Likely to play a role in determining whether a dsRNA enters the RNAi pathway (PubMed:14657490).</text>
</comment>
<comment type="catalytic activity">
    <reaction evidence="4">
        <text>adenosine in double-stranded RNA + H2O + H(+) = inosine in double-stranded RNA + NH4(+)</text>
        <dbReference type="Rhea" id="RHEA:10120"/>
        <dbReference type="Rhea" id="RHEA-COMP:13885"/>
        <dbReference type="Rhea" id="RHEA-COMP:13886"/>
        <dbReference type="ChEBI" id="CHEBI:15377"/>
        <dbReference type="ChEBI" id="CHEBI:15378"/>
        <dbReference type="ChEBI" id="CHEBI:28938"/>
        <dbReference type="ChEBI" id="CHEBI:74411"/>
        <dbReference type="ChEBI" id="CHEBI:82852"/>
        <dbReference type="EC" id="3.5.4.37"/>
    </reaction>
</comment>
<comment type="subunit">
    <text evidence="7 9">Interacts with A-to-I RNA editing regulator adr-1 (PubMed:24508457). Interacts with adbp-1; the interaction facilitates adr-2 nuclear localization (PubMed:18780728).</text>
</comment>
<comment type="subcellular location">
    <subcellularLocation>
        <location evidence="7">Nucleus</location>
    </subcellularLocation>
    <subcellularLocation>
        <location evidence="7">Cytoplasm</location>
    </subcellularLocation>
</comment>
<comment type="developmental stage">
    <text evidence="6">Highest expression observed in the embryo. Levels decrease dramatically after embryogenesis, remain relatively constant during larval stages and increase again at the onset of adulthood.</text>
</comment>
<comment type="miscellaneous">
    <text evidence="3 7">Can prevent somatic transgenes from inducing gene silencing via the RNA interference (RNAi) pathway. This may occur due to A-to-I editing of transgene-derived dsRNA, preventing transgene RNAi.</text>
</comment>